<gene>
    <name type="primary">S</name>
</gene>
<keyword id="KW-0024">Alternative initiation</keyword>
<keyword id="KW-0025">Alternative splicing</keyword>
<keyword id="KW-1168">Fusion of virus membrane with host membrane</keyword>
<keyword id="KW-0325">Glycoprotein</keyword>
<keyword id="KW-0945">Host-virus interaction</keyword>
<keyword id="KW-0449">Lipoprotein</keyword>
<keyword id="KW-0472">Membrane</keyword>
<keyword id="KW-0519">Myristate</keyword>
<keyword id="KW-0812">Transmembrane</keyword>
<keyword id="KW-1133">Transmembrane helix</keyword>
<keyword id="KW-1161">Viral attachment to host cell</keyword>
<keyword id="KW-0261">Viral envelope protein</keyword>
<keyword id="KW-1162">Viral penetration into host cytoplasm</keyword>
<keyword id="KW-0946">Virion</keyword>
<keyword id="KW-1160">Virus entry into host cell</keyword>
<proteinExistence type="evidence at transcript level"/>
<reference key="1">
    <citation type="journal article" date="1986" name="Gene">
        <title>Nucleotide sequence of the woodchuck hepatitis virus surface antigen mRNAs and the variability of three overlapping viral genes.</title>
        <authorList>
            <person name="Etiemble J."/>
            <person name="Moeroey T."/>
            <person name="Trepo C."/>
            <person name="Tiollais P."/>
            <person name="Buendia M.-A."/>
        </authorList>
    </citation>
    <scope>NUCLEOTIDE SEQUENCE [MRNA]</scope>
</reference>
<reference key="2">
    <citation type="journal article" date="1996" name="Intervirology">
        <title>Functions of the large hepatitis B virus surface protein in viral particle morphogenesis.</title>
        <authorList>
            <person name="Bruss V."/>
            <person name="Gerhardt E."/>
            <person name="Vieluf K."/>
            <person name="Wunderlich G."/>
        </authorList>
    </citation>
    <scope>REVIEW</scope>
</reference>
<reference key="3">
    <citation type="journal article" date="1998" name="Adv. Exp. Med. Biol.">
        <title>Role of glycan processing in hepatitis B virus envelope protein trafficking.</title>
        <authorList>
            <person name="Block T.M."/>
            <person name="Lu X."/>
            <person name="Mehta A."/>
            <person name="Park J."/>
            <person name="Blumberg B.S."/>
            <person name="Dwek R."/>
        </authorList>
    </citation>
    <scope>REVIEW</scope>
</reference>
<reference key="4">
    <citation type="journal article" date="2004" name="Virus Res.">
        <title>Envelopment of the hepatitis B virus nucleocapsid.</title>
        <authorList>
            <person name="Bruss V."/>
        </authorList>
    </citation>
    <scope>REVIEW</scope>
</reference>
<reference key="5">
    <citation type="journal article" date="2006" name="Cancer Sci.">
        <title>Hepatitis B virus pre-S mutants, endoplasmic reticulum stress and hepatocarcinogenesis.</title>
        <authorList>
            <person name="Wang H.C."/>
            <person name="Huang W."/>
            <person name="Lai M.D."/>
            <person name="Su I.J."/>
        </authorList>
    </citation>
    <scope>REVIEW</scope>
</reference>
<feature type="chain" id="PRO_0000038125" description="Large envelope protein">
    <location>
        <begin position="1" status="less than"/>
        <end position="292"/>
    </location>
</feature>
<feature type="topological domain" description="Intravirion; in internal conformation" evidence="4">
    <location>
        <begin position="1" status="less than"/>
        <end position="147"/>
    </location>
</feature>
<feature type="topological domain" description="Virion surface; in external conformation" evidence="4">
    <location>
        <begin position="1" status="less than"/>
        <end position="75"/>
    </location>
</feature>
<feature type="transmembrane region" description="Helical; Note=In external conformation" evidence="4">
    <location>
        <begin position="76"/>
        <end position="96"/>
    </location>
</feature>
<feature type="topological domain" description="Intravirion; in external conformation" evidence="4">
    <location>
        <begin position="97"/>
        <end position="147"/>
    </location>
</feature>
<feature type="transmembrane region" description="Helical" evidence="4">
    <location>
        <begin position="148"/>
        <end position="168"/>
    </location>
</feature>
<feature type="topological domain" description="Virion surface" evidence="4">
    <location>
        <begin position="169"/>
        <end position="240"/>
    </location>
</feature>
<feature type="transmembrane region" description="Helical" evidence="4">
    <location>
        <begin position="241"/>
        <end position="261"/>
    </location>
</feature>
<feature type="topological domain" description="Intravirion" evidence="4">
    <location>
        <begin position="262"/>
        <end position="267"/>
    </location>
</feature>
<feature type="transmembrane region" description="Helical" evidence="4">
    <location>
        <begin position="268"/>
        <end position="290"/>
    </location>
</feature>
<feature type="topological domain" description="Virion surface" evidence="4">
    <location>
        <begin position="291"/>
        <end position="292"/>
    </location>
</feature>
<feature type="region of interest" description="Pre-S" evidence="1">
    <location>
        <begin position="1" status="less than"/>
        <end position="70"/>
    </location>
</feature>
<feature type="region of interest" description="Pre-S1" evidence="1">
    <location>
        <begin position="1" status="less than"/>
        <end position="10"/>
    </location>
</feature>
<feature type="region of interest" description="Pre-S2" evidence="1">
    <location>
        <begin position="11"/>
        <end position="70"/>
    </location>
</feature>
<feature type="glycosylation site" description="N-linked (GlcNAc...) asparagine; by host" evidence="1">
    <location>
        <position position="212"/>
    </location>
</feature>
<feature type="splice variant" id="VSP_031462" description="In isoform S." evidence="5">
    <location>
        <begin position="1" status="less than"/>
        <end position="70"/>
    </location>
</feature>
<feature type="splice variant" id="VSP_031463" description="In isoform M." evidence="5">
    <location>
        <begin position="1" status="less than"/>
        <end position="10"/>
    </location>
</feature>
<feature type="non-terminal residue">
    <location>
        <position position="1"/>
    </location>
</feature>
<feature type="glycosylation site" description="N-linked (GlcNAc...) asparagine" evidence="2">
    <location sequence="P11293-2">
        <position position="3"/>
    </location>
</feature>
<dbReference type="EMBL" id="M15954">
    <property type="protein sequence ID" value="AAA69574.1"/>
    <property type="molecule type" value="mRNA"/>
</dbReference>
<dbReference type="PIR" id="B29498">
    <property type="entry name" value="SAVL64"/>
</dbReference>
<dbReference type="SMR" id="P11293"/>
<dbReference type="GlyCosmos" id="P11293">
    <property type="glycosylation" value="2 sites, No reported glycans"/>
</dbReference>
<dbReference type="GO" id="GO:0016020">
    <property type="term" value="C:membrane"/>
    <property type="evidence" value="ECO:0007669"/>
    <property type="project" value="UniProtKB-KW"/>
</dbReference>
<dbReference type="GO" id="GO:0019031">
    <property type="term" value="C:viral envelope"/>
    <property type="evidence" value="ECO:0007669"/>
    <property type="project" value="UniProtKB-KW"/>
</dbReference>
<dbReference type="GO" id="GO:0055036">
    <property type="term" value="C:virion membrane"/>
    <property type="evidence" value="ECO:0007669"/>
    <property type="project" value="UniProtKB-SubCell"/>
</dbReference>
<dbReference type="GO" id="GO:0039663">
    <property type="term" value="P:membrane fusion involved in viral entry into host cell"/>
    <property type="evidence" value="ECO:0007669"/>
    <property type="project" value="UniProtKB-KW"/>
</dbReference>
<dbReference type="GO" id="GO:0046718">
    <property type="term" value="P:symbiont entry into host cell"/>
    <property type="evidence" value="ECO:0007669"/>
    <property type="project" value="UniProtKB-KW"/>
</dbReference>
<dbReference type="GO" id="GO:0019062">
    <property type="term" value="P:virion attachment to host cell"/>
    <property type="evidence" value="ECO:0007669"/>
    <property type="project" value="UniProtKB-KW"/>
</dbReference>
<dbReference type="InterPro" id="IPR000349">
    <property type="entry name" value="HBV_HBSAG"/>
</dbReference>
<dbReference type="Pfam" id="PF00695">
    <property type="entry name" value="vMSA"/>
    <property type="match status" value="1"/>
</dbReference>
<organismHost>
    <name type="scientific">Marmota monax</name>
    <name type="common">Woodchuck</name>
    <dbReference type="NCBI Taxonomy" id="9995"/>
</organismHost>
<accession>P11293</accession>
<name>HBSAG_WHV6</name>
<comment type="function">
    <text evidence="1">The large envelope protein exists in two topological conformations, one which is termed 'external' or Le-HBsAg and the other 'internal' or Li-HBsAg. In its external conformation the protein attaches the virus to cell receptors and thereby initiating infection. This interaction determines the species specificity and liver tropism. The large envelope protein probably also assumes fusion between virion and host membranes. In its internal conformation the protein plays a role in virion morphogenesis and mediates the contact with the nucleocapsid like a matrix protein (By similarity).</text>
</comment>
<comment type="function">
    <text evidence="1">The middle envelope protein plays an important role in the budding of the virion. It is involved in the induction of budding in a nucleocapsid independent way. In this process the majority of envelope proteins bud to form subviral lipoprotein particles of 22 nm of diameter that do not contain a nucleocapsid (By similarity).</text>
</comment>
<comment type="subunit">
    <molecule>Isoform L</molecule>
    <text evidence="3">In its internal form (Li-HBsAg), interacts with the capsid protein and with the isoform S. Interacts with host chaperone CANX.</text>
</comment>
<comment type="subunit">
    <molecule>Isoform M</molecule>
    <text evidence="3">Associates with host chaperone CANX through its pre-S2 N glycan; this association may be essential for isoform M proper secretion.</text>
</comment>
<comment type="subunit">
    <molecule>Isoform S</molecule>
    <text evidence="3">Interacts with isoform L. Interacts with the antigens of satellite virus HDV (HDVAgs); this interaction is required for encapsidation of HDV genomic RNA.</text>
</comment>
<comment type="subcellular location">
    <subcellularLocation>
        <location evidence="1">Virion membrane</location>
    </subcellularLocation>
</comment>
<comment type="alternative products">
    <event type="alternative splicing"/>
    <event type="alternative initiation"/>
    <isoform>
        <id>P11293-1</id>
        <name>L</name>
        <name>Large envelope protein</name>
        <name>LHB</name>
        <name>L-HBsAg</name>
        <sequence type="displayed"/>
    </isoform>
    <isoform>
        <id>P11293-2</id>
        <name>M</name>
        <name>Middle envelope protein</name>
        <name>MHB</name>
        <name>M-HBsAg</name>
        <sequence type="described" ref="VSP_031463"/>
    </isoform>
    <isoform>
        <id>P11293-3</id>
        <name>S</name>
        <name>Small envelope protein</name>
        <name>SHB</name>
        <name>S-HBsAg</name>
        <sequence type="described" ref="VSP_031462"/>
    </isoform>
</comment>
<comment type="domain">
    <text>The large envelope protein is synthesized with the pre-S region at the cytosolic side of the endoplasmic reticulum and, hence will be within the virion after budding. Therefore the pre-S region is not N-glycosylated. Later a post-translational translocation of N-terminal pre-S and TM1 domains occur in about 50% of proteins at the virion surface. These molecules change their topology by an unknown mechanism, resulting in exposure of pre-S region at virion surface. For isoform M in contrast, the pre-S2 region is translocated cotranslationally to the endoplasmic reticulum lumen and is N-glycosylated.</text>
</comment>
<comment type="PTM">
    <text evidence="2">Isoform M is N-glycosylated by host at the pre-S2 region.</text>
</comment>
<comment type="PTM">
    <text evidence="1">Myristoylated.</text>
</comment>
<comment type="similarity">
    <text evidence="5">Belongs to the orthohepadnavirus major surface antigen family.</text>
</comment>
<organism>
    <name type="scientific">Woodchuck hepatitis B virus (isolate w64/pWS23)</name>
    <name type="common">WHV</name>
    <dbReference type="NCBI Taxonomy" id="10436"/>
    <lineage>
        <taxon>Viruses</taxon>
        <taxon>Riboviria</taxon>
        <taxon>Pararnavirae</taxon>
        <taxon>Artverviricota</taxon>
        <taxon>Revtraviricetes</taxon>
        <taxon>Blubervirales</taxon>
        <taxon>Hepadnaviridae</taxon>
        <taxon>Orthohepadnavirus</taxon>
        <taxon>Woodchuck hepatitis virus</taxon>
    </lineage>
</organism>
<sequence>PLRDTHPHLTMKNQTFHLQGFVDGLRDLTTTERHHNAYGDPFTTLSPVVPTVSTTLSPPSTTGDPALSPEMSPSSLLGLLAGLQVVYFLWTKIPTIAQNLDWWWTSLSFPGGIPECTGQNSQFQTCKHLPTSCPPTCNGFRWMYLRRFIIYLLVLLLCLIFLLVLLDWKGLLPVCPLQPTTETTVNCRQCTLSVQDTYTPPYCCCLKPTAGNCTCWPIPSSWALGNYLWEWALARFSWLNLLVPLLQWLGGISLIAWFLLIWMIWFWGPALLSILPPFIPIFVLFFLIWVYI</sequence>
<evidence type="ECO:0000250" key="1"/>
<evidence type="ECO:0000250" key="2">
    <source>
        <dbReference type="UniProtKB" id="P03138"/>
    </source>
</evidence>
<evidence type="ECO:0000250" key="3">
    <source>
        <dbReference type="UniProtKB" id="P03141"/>
    </source>
</evidence>
<evidence type="ECO:0000255" key="4"/>
<evidence type="ECO:0000305" key="5"/>
<protein>
    <recommendedName>
        <fullName>Large envelope protein</fullName>
    </recommendedName>
    <alternativeName>
        <fullName>L glycoprotein</fullName>
    </alternativeName>
    <alternativeName>
        <fullName>L-HBsAg</fullName>
        <shortName>LHB</shortName>
    </alternativeName>
    <alternativeName>
        <fullName>Large S protein</fullName>
    </alternativeName>
    <alternativeName>
        <fullName>Large surface protein</fullName>
    </alternativeName>
    <alternativeName>
        <fullName>Major surface antigen</fullName>
    </alternativeName>
</protein>